<organism>
    <name type="scientific">Homo sapiens</name>
    <name type="common">Human</name>
    <dbReference type="NCBI Taxonomy" id="9606"/>
    <lineage>
        <taxon>Eukaryota</taxon>
        <taxon>Metazoa</taxon>
        <taxon>Chordata</taxon>
        <taxon>Craniata</taxon>
        <taxon>Vertebrata</taxon>
        <taxon>Euteleostomi</taxon>
        <taxon>Mammalia</taxon>
        <taxon>Eutheria</taxon>
        <taxon>Euarchontoglires</taxon>
        <taxon>Primates</taxon>
        <taxon>Haplorrhini</taxon>
        <taxon>Catarrhini</taxon>
        <taxon>Hominidae</taxon>
        <taxon>Homo</taxon>
    </lineage>
</organism>
<sequence>MDGRTPRPQDAPARRKPKAKAPLPPAETKYTDVSSAADSVESTAFIMEQKENMIDKDVELSVVLPGDIIKSTTVHGSKPMMDLLIFLCAQYHLNPSSYTIDLLSAEQNHIKFKPNTPIGMLEVEKVILKPKMLDKKKPTPIIPEKTVRVVINFKKTQKTIVRVSPHASLQELAPIICSKCEFDPLHTLLLKDYQSQEPLDLTKSLNDLGLRELYAMDVNRESCQISQNLDIMKEKENKGFFSFFQRSKKKRDQTASAPATPLVNKHRPTFTRSNTISKPYISNTLPSDAPKKRRAPLPPMPASQSVPQDLAHIQERPASCIVKSMSVDETDKSPCEAGRVRAGSLQLSSMSAGNSSLRRTKRKAPSPPSKIPPHQSDENSRVTALQPVDGVPPDSASEANSPEELSSPAGISSDYSLEEIDEKEELSEVPKVEAENISPKSQDIPFVSTDIINTLKNDPDSALGNGSGEFSQNSMEEKQETKSTDGQEPHSVVYDTSNGKKVVDSIRNLKSLGPNQENVVQNEIIVYPENTEDNMKNGVKKTEINVEGVAKNNNIDMEVERPSNSEAHETDTAISYKENHLAASSVPDQKLNQPSAEKTKDAAIQTTPSCNSFDGKHQDHNLSDSKVEECVQTSNNNISTQHSCLSSQDSVNTSREFRSQGTLIIHSEDPLTVKDPICAHGNDDLLPPVDRIDKNSTASYLKNYPLYRQDYNPKPKPSNEITREYIPKIGMTTYKIVPPKSLEISKDWQSETIEYKDDQDMHALGKKHTHENVKETAIQTEDSAISESPEEPLPNLKPKPNLRTEHQVPSSVSSPDDAMVSPLKPAPKMTRDTGTAPFAPNLEEINNILESKFKSRASNAQAKPSSFFLQMQKRVSGHYVTSAAAKSVHAAPNPAPKELTNKEAERDMLPSPEQTLSPLSKMPHSVPQPLVEKTDDDVIGQAPAEASPPPIAPKPVTIPASQVSTQNLKTLKTFGAPRPYSSSGPSPFALAVVKRSQSFSKERTESPSASALVQPPANTEEGKTHSVNKFVDIPQLGVSDKENNSAHNEQNSQIPTPTDGPSFTVMRQSSLTFQSSDPEQMRQSLLTAIRSGEAAAKLKRVTIPSNTISVNGRSRLSHSMSPDAQDGH</sequence>
<accession>Q53SF7</accession>
<accession>A6NMZ3</accession>
<accession>Q6IQ33</accession>
<accession>Q7Z3I6</accession>
<accession>Q9BRH4</accession>
<accession>Q9UG88</accession>
<accession>Q9Y2I3</accession>
<comment type="interaction">
    <interactant intactId="EBI-2835780">
        <id>Q53SF7</id>
    </interactant>
    <interactant intactId="EBI-721769">
        <id>Q9BY11</id>
        <label>PACSIN1</label>
    </interactant>
    <organismsDiffer>false</organismsDiffer>
    <experiments>3</experiments>
</comment>
<comment type="alternative products">
    <event type="alternative splicing"/>
    <isoform>
        <id>Q53SF7-4</id>
        <name>4</name>
        <sequence type="displayed"/>
    </isoform>
    <isoform>
        <id>Q53SF7-2</id>
        <name>2</name>
        <sequence type="described" ref="VSP_060296"/>
    </isoform>
    <isoform>
        <id>Q53SF7-3</id>
        <name>3</name>
        <sequence type="described" ref="VSP_060297 VSP_060298"/>
    </isoform>
</comment>
<comment type="sequence caution" evidence="4">
    <conflict type="miscellaneous discrepancy">
        <sequence resource="EMBL-CDS" id="AAH06264"/>
    </conflict>
    <text>Intron retention.</text>
</comment>
<comment type="sequence caution" evidence="4">
    <conflict type="erroneous initiation">
        <sequence resource="EMBL-CDS" id="BAA76821"/>
    </conflict>
    <text>Extended N-terminus.</text>
</comment>
<proteinExistence type="evidence at protein level"/>
<protein>
    <recommendedName>
        <fullName evidence="4">Cordon-bleu protein-like 1</fullName>
    </recommendedName>
</protein>
<feature type="chain" id="PRO_0000260493" description="Cordon-bleu protein-like 1">
    <location>
        <begin position="1"/>
        <end position="1128"/>
    </location>
</feature>
<feature type="domain" description="WH2" evidence="2">
    <location>
        <begin position="1081"/>
        <end position="1101"/>
    </location>
</feature>
<feature type="region of interest" description="Disordered" evidence="3">
    <location>
        <begin position="1"/>
        <end position="35"/>
    </location>
</feature>
<feature type="region of interest" description="Disordered" evidence="3">
    <location>
        <begin position="249"/>
        <end position="309"/>
    </location>
</feature>
<feature type="region of interest" description="Disordered" evidence="3">
    <location>
        <begin position="325"/>
        <end position="441"/>
    </location>
</feature>
<feature type="region of interest" description="Disordered" evidence="3">
    <location>
        <begin position="454"/>
        <end position="499"/>
    </location>
</feature>
<feature type="region of interest" description="Disordered" evidence="3">
    <location>
        <begin position="780"/>
        <end position="840"/>
    </location>
</feature>
<feature type="region of interest" description="Disordered" evidence="3">
    <location>
        <begin position="882"/>
        <end position="964"/>
    </location>
</feature>
<feature type="region of interest" description="Disordered" evidence="3">
    <location>
        <begin position="995"/>
        <end position="1081"/>
    </location>
</feature>
<feature type="region of interest" description="Disordered" evidence="3">
    <location>
        <begin position="1103"/>
        <end position="1128"/>
    </location>
</feature>
<feature type="short sequence motif" description="KKRRAP 1">
    <location>
        <begin position="291"/>
        <end position="296"/>
    </location>
</feature>
<feature type="short sequence motif" description="KKRRAP 2">
    <location>
        <begin position="360"/>
        <end position="365"/>
    </location>
</feature>
<feature type="compositionally biased region" description="Polar residues" evidence="3">
    <location>
        <begin position="270"/>
        <end position="286"/>
    </location>
</feature>
<feature type="compositionally biased region" description="Polar residues" evidence="3">
    <location>
        <begin position="345"/>
        <end position="357"/>
    </location>
</feature>
<feature type="compositionally biased region" description="Polar residues" evidence="3">
    <location>
        <begin position="397"/>
        <end position="415"/>
    </location>
</feature>
<feature type="compositionally biased region" description="Acidic residues" evidence="3">
    <location>
        <begin position="416"/>
        <end position="425"/>
    </location>
</feature>
<feature type="compositionally biased region" description="Basic and acidic residues" evidence="3">
    <location>
        <begin position="475"/>
        <end position="488"/>
    </location>
</feature>
<feature type="compositionally biased region" description="Basic and acidic residues" evidence="3">
    <location>
        <begin position="899"/>
        <end position="908"/>
    </location>
</feature>
<feature type="compositionally biased region" description="Polar residues" evidence="3">
    <location>
        <begin position="1045"/>
        <end position="1081"/>
    </location>
</feature>
<feature type="compositionally biased region" description="Polar residues" evidence="3">
    <location>
        <begin position="1103"/>
        <end position="1122"/>
    </location>
</feature>
<feature type="modified residue" description="Phosphothreonine" evidence="1">
    <location>
        <position position="139"/>
    </location>
</feature>
<feature type="modified residue" description="Phosphoserine" evidence="10">
    <location>
        <position position="204"/>
    </location>
</feature>
<feature type="modified residue" description="Phosphoserine" evidence="10">
    <location>
        <position position="222"/>
    </location>
</feature>
<feature type="modified residue" description="Phosphoserine" evidence="6 7 8 10">
    <location>
        <position position="256"/>
    </location>
</feature>
<feature type="modified residue" description="Phosphothreonine" evidence="6 7 10">
    <location>
        <position position="260"/>
    </location>
</feature>
<feature type="modified residue" description="Phosphoserine" evidence="9">
    <location>
        <position position="273"/>
    </location>
</feature>
<feature type="modified residue" description="Phosphothreonine" evidence="9">
    <location>
        <position position="284"/>
    </location>
</feature>
<feature type="modified residue" description="Phosphoserine" evidence="1">
    <location>
        <position position="326"/>
    </location>
</feature>
<feature type="modified residue" description="Phosphoserine" evidence="1">
    <location>
        <position position="333"/>
    </location>
</feature>
<feature type="modified residue" description="Phosphoserine" evidence="9 10">
    <location>
        <position position="344"/>
    </location>
</feature>
<feature type="modified residue" description="Phosphoserine" evidence="9">
    <location>
        <position position="356"/>
    </location>
</feature>
<feature type="modified residue" description="Phosphoserine" evidence="10">
    <location>
        <position position="438"/>
    </location>
</feature>
<feature type="modified residue" description="Phosphoserine" evidence="7 10">
    <location>
        <position position="441"/>
    </location>
</feature>
<feature type="modified residue" description="Phosphoserine" evidence="1">
    <location>
        <position position="461"/>
    </location>
</feature>
<feature type="modified residue" description="Phosphoserine" evidence="1">
    <location>
        <position position="471"/>
    </location>
</feature>
<feature type="modified residue" description="Phosphoserine" evidence="1">
    <location>
        <position position="474"/>
    </location>
</feature>
<feature type="modified residue" description="Phosphoserine" evidence="1">
    <location>
        <position position="563"/>
    </location>
</feature>
<feature type="modified residue" description="Phosphoserine" evidence="1">
    <location>
        <position position="584"/>
    </location>
</feature>
<feature type="modified residue" description="Phosphoserine" evidence="10">
    <location>
        <position position="786"/>
    </location>
</feature>
<feature type="modified residue" description="Phosphoserine" evidence="1">
    <location>
        <position position="813"/>
    </location>
</feature>
<feature type="modified residue" description="Phosphoserine" evidence="10">
    <location>
        <position position="814"/>
    </location>
</feature>
<feature type="modified residue" description="Phosphoserine" evidence="7 10">
    <location>
        <position position="821"/>
    </location>
</feature>
<feature type="modified residue" description="Phosphoserine" evidence="7 10">
    <location>
        <position position="911"/>
    </location>
</feature>
<feature type="modified residue" description="Phosphoserine" evidence="7 9 10">
    <location>
        <position position="917"/>
    </location>
</feature>
<feature type="modified residue" description="Phosphoserine" evidence="1">
    <location>
        <position position="947"/>
    </location>
</feature>
<feature type="modified residue" description="Phosphoserine" evidence="1">
    <location>
        <position position="1069"/>
    </location>
</feature>
<feature type="modified residue" description="Phosphoserine" evidence="1">
    <location>
        <position position="1070"/>
    </location>
</feature>
<feature type="modified residue" description="Phosphoserine" evidence="8">
    <location>
        <position position="1121"/>
    </location>
</feature>
<feature type="splice variant" id="VSP_060296" description="In isoform 2.">
    <original>M</original>
    <variation>MCGRAAEAAASSRTPGREMGQAVTRRLGAGARAAPRRAM</variation>
    <location>
        <position position="1"/>
    </location>
</feature>
<feature type="splice variant" id="VSP_060297" description="In isoform 3.">
    <original>A</original>
    <variation>ETFHPGLSSQEQCTAPKLMEETSVFECPGTPEAAITSLTS</variation>
    <location>
        <position position="409"/>
    </location>
</feature>
<feature type="splice variant" id="VSP_060298" description="In isoform 3.">
    <location>
        <position position="519"/>
    </location>
</feature>
<feature type="sequence conflict" description="In Ref. 5; AAH71588." evidence="4" ref="5">
    <original>T</original>
    <variation>A</variation>
    <location>
        <position position="330"/>
    </location>
</feature>
<feature type="sequence conflict" description="In Ref. 6; CAB43215." evidence="4" ref="6">
    <original>T</original>
    <variation>G</variation>
    <location>
        <position position="769"/>
    </location>
</feature>
<feature type="sequence conflict" description="In Ref. 6; CAD97877." evidence="4" ref="6">
    <original>M</original>
    <variation>T</variation>
    <location>
        <position position="871"/>
    </location>
</feature>
<feature type="sequence conflict" description="In Ref. 5; AAH71588." evidence="4" ref="5">
    <original>K</original>
    <variation>E</variation>
    <location>
        <position position="972"/>
    </location>
</feature>
<feature type="sequence conflict" description="In Ref. 6; CAD97877." evidence="4" ref="6">
    <original>T</original>
    <variation>A</variation>
    <location>
        <position position="1019"/>
    </location>
</feature>
<feature type="sequence conflict" description="In Ref. 6; CAB43215." evidence="4" ref="6">
    <original>S</original>
    <variation>G</variation>
    <location>
        <position position="1075"/>
    </location>
</feature>
<feature type="strand" evidence="11">
    <location>
        <begin position="147"/>
        <end position="153"/>
    </location>
</feature>
<feature type="turn" evidence="11">
    <location>
        <begin position="154"/>
        <end position="156"/>
    </location>
</feature>
<feature type="strand" evidence="11">
    <location>
        <begin position="157"/>
        <end position="163"/>
    </location>
</feature>
<feature type="strand" evidence="11">
    <location>
        <begin position="165"/>
        <end position="167"/>
    </location>
</feature>
<feature type="helix" evidence="11">
    <location>
        <begin position="169"/>
        <end position="179"/>
    </location>
</feature>
<feature type="strand" evidence="11">
    <location>
        <begin position="186"/>
        <end position="191"/>
    </location>
</feature>
<feature type="helix" evidence="11">
    <location>
        <begin position="205"/>
        <end position="208"/>
    </location>
</feature>
<feature type="strand" evidence="11">
    <location>
        <begin position="211"/>
        <end position="217"/>
    </location>
</feature>
<reference key="1">
    <citation type="journal article" date="1999" name="DNA Res.">
        <title>Prediction of the coding sequences of unidentified human genes. XIII. The complete sequences of 100 new cDNA clones from brain which code for large proteins in vitro.</title>
        <authorList>
            <person name="Nagase T."/>
            <person name="Ishikawa K."/>
            <person name="Suyama M."/>
            <person name="Kikuno R."/>
            <person name="Hirosawa M."/>
            <person name="Miyajima N."/>
            <person name="Tanaka A."/>
            <person name="Kotani H."/>
            <person name="Nomura N."/>
            <person name="Ohara O."/>
        </authorList>
    </citation>
    <scope>NUCLEOTIDE SEQUENCE [LARGE SCALE MRNA] (ISOFORM 3)</scope>
    <source>
        <tissue>Brain</tissue>
    </source>
</reference>
<reference key="2">
    <citation type="submission" date="2006-07" db="EMBL/GenBank/DDBJ databases">
        <authorList>
            <person name="Totoki Y."/>
            <person name="Toyoda A."/>
            <person name="Takeda T."/>
            <person name="Sakaki Y."/>
            <person name="Tanaka A."/>
            <person name="Yokoyama S."/>
        </authorList>
    </citation>
    <scope>NUCLEOTIDE SEQUENCE [LARGE SCALE MRNA] (ISOFORM 2)</scope>
    <source>
        <tissue>Kidney</tissue>
    </source>
</reference>
<reference key="3">
    <citation type="journal article" date="2005" name="Nature">
        <title>Generation and annotation of the DNA sequences of human chromosomes 2 and 4.</title>
        <authorList>
            <person name="Hillier L.W."/>
            <person name="Graves T.A."/>
            <person name="Fulton R.S."/>
            <person name="Fulton L.A."/>
            <person name="Pepin K.H."/>
            <person name="Minx P."/>
            <person name="Wagner-McPherson C."/>
            <person name="Layman D."/>
            <person name="Wylie K."/>
            <person name="Sekhon M."/>
            <person name="Becker M.C."/>
            <person name="Fewell G.A."/>
            <person name="Delehaunty K.D."/>
            <person name="Miner T.L."/>
            <person name="Nash W.E."/>
            <person name="Kremitzki C."/>
            <person name="Oddy L."/>
            <person name="Du H."/>
            <person name="Sun H."/>
            <person name="Bradshaw-Cordum H."/>
            <person name="Ali J."/>
            <person name="Carter J."/>
            <person name="Cordes M."/>
            <person name="Harris A."/>
            <person name="Isak A."/>
            <person name="van Brunt A."/>
            <person name="Nguyen C."/>
            <person name="Du F."/>
            <person name="Courtney L."/>
            <person name="Kalicki J."/>
            <person name="Ozersky P."/>
            <person name="Abbott S."/>
            <person name="Armstrong J."/>
            <person name="Belter E.A."/>
            <person name="Caruso L."/>
            <person name="Cedroni M."/>
            <person name="Cotton M."/>
            <person name="Davidson T."/>
            <person name="Desai A."/>
            <person name="Elliott G."/>
            <person name="Erb T."/>
            <person name="Fronick C."/>
            <person name="Gaige T."/>
            <person name="Haakenson W."/>
            <person name="Haglund K."/>
            <person name="Holmes A."/>
            <person name="Harkins R."/>
            <person name="Kim K."/>
            <person name="Kruchowski S.S."/>
            <person name="Strong C.M."/>
            <person name="Grewal N."/>
            <person name="Goyea E."/>
            <person name="Hou S."/>
            <person name="Levy A."/>
            <person name="Martinka S."/>
            <person name="Mead K."/>
            <person name="McLellan M.D."/>
            <person name="Meyer R."/>
            <person name="Randall-Maher J."/>
            <person name="Tomlinson C."/>
            <person name="Dauphin-Kohlberg S."/>
            <person name="Kozlowicz-Reilly A."/>
            <person name="Shah N."/>
            <person name="Swearengen-Shahid S."/>
            <person name="Snider J."/>
            <person name="Strong J.T."/>
            <person name="Thompson J."/>
            <person name="Yoakum M."/>
            <person name="Leonard S."/>
            <person name="Pearman C."/>
            <person name="Trani L."/>
            <person name="Radionenko M."/>
            <person name="Waligorski J.E."/>
            <person name="Wang C."/>
            <person name="Rock S.M."/>
            <person name="Tin-Wollam A.-M."/>
            <person name="Maupin R."/>
            <person name="Latreille P."/>
            <person name="Wendl M.C."/>
            <person name="Yang S.-P."/>
            <person name="Pohl C."/>
            <person name="Wallis J.W."/>
            <person name="Spieth J."/>
            <person name="Bieri T.A."/>
            <person name="Berkowicz N."/>
            <person name="Nelson J.O."/>
            <person name="Osborne J."/>
            <person name="Ding L."/>
            <person name="Meyer R."/>
            <person name="Sabo A."/>
            <person name="Shotland Y."/>
            <person name="Sinha P."/>
            <person name="Wohldmann P.E."/>
            <person name="Cook L.L."/>
            <person name="Hickenbotham M.T."/>
            <person name="Eldred J."/>
            <person name="Williams D."/>
            <person name="Jones T.A."/>
            <person name="She X."/>
            <person name="Ciccarelli F.D."/>
            <person name="Izaurralde E."/>
            <person name="Taylor J."/>
            <person name="Schmutz J."/>
            <person name="Myers R.M."/>
            <person name="Cox D.R."/>
            <person name="Huang X."/>
            <person name="McPherson J.D."/>
            <person name="Mardis E.R."/>
            <person name="Clifton S.W."/>
            <person name="Warren W.C."/>
            <person name="Chinwalla A.T."/>
            <person name="Eddy S.R."/>
            <person name="Marra M.A."/>
            <person name="Ovcharenko I."/>
            <person name="Furey T.S."/>
            <person name="Miller W."/>
            <person name="Eichler E.E."/>
            <person name="Bork P."/>
            <person name="Suyama M."/>
            <person name="Torrents D."/>
            <person name="Waterston R.H."/>
            <person name="Wilson R.K."/>
        </authorList>
    </citation>
    <scope>NUCLEOTIDE SEQUENCE [LARGE SCALE GENOMIC DNA]</scope>
</reference>
<reference key="4">
    <citation type="submission" date="2005-09" db="EMBL/GenBank/DDBJ databases">
        <authorList>
            <person name="Mural R.J."/>
            <person name="Istrail S."/>
            <person name="Sutton G.G."/>
            <person name="Florea L."/>
            <person name="Halpern A.L."/>
            <person name="Mobarry C.M."/>
            <person name="Lippert R."/>
            <person name="Walenz B."/>
            <person name="Shatkay H."/>
            <person name="Dew I."/>
            <person name="Miller J.R."/>
            <person name="Flanigan M.J."/>
            <person name="Edwards N.J."/>
            <person name="Bolanos R."/>
            <person name="Fasulo D."/>
            <person name="Halldorsson B.V."/>
            <person name="Hannenhalli S."/>
            <person name="Turner R."/>
            <person name="Yooseph S."/>
            <person name="Lu F."/>
            <person name="Nusskern D.R."/>
            <person name="Shue B.C."/>
            <person name="Zheng X.H."/>
            <person name="Zhong F."/>
            <person name="Delcher A.L."/>
            <person name="Huson D.H."/>
            <person name="Kravitz S.A."/>
            <person name="Mouchard L."/>
            <person name="Reinert K."/>
            <person name="Remington K.A."/>
            <person name="Clark A.G."/>
            <person name="Waterman M.S."/>
            <person name="Eichler E.E."/>
            <person name="Adams M.D."/>
            <person name="Hunkapiller M.W."/>
            <person name="Myers E.W."/>
            <person name="Venter J.C."/>
        </authorList>
    </citation>
    <scope>NUCLEOTIDE SEQUENCE [LARGE SCALE GENOMIC DNA]</scope>
</reference>
<reference key="5">
    <citation type="journal article" date="2004" name="Genome Res.">
        <title>The status, quality, and expansion of the NIH full-length cDNA project: the Mammalian Gene Collection (MGC).</title>
        <authorList>
            <consortium name="The MGC Project Team"/>
        </authorList>
    </citation>
    <scope>NUCLEOTIDE SEQUENCE [LARGE SCALE MRNA] (ISOFORM 4)</scope>
    <source>
        <tissue>Ovary</tissue>
        <tissue>Placenta</tissue>
    </source>
</reference>
<reference key="6">
    <citation type="journal article" date="2007" name="BMC Genomics">
        <title>The full-ORF clone resource of the German cDNA consortium.</title>
        <authorList>
            <person name="Bechtel S."/>
            <person name="Rosenfelder H."/>
            <person name="Duda A."/>
            <person name="Schmidt C.P."/>
            <person name="Ernst U."/>
            <person name="Wellenreuther R."/>
            <person name="Mehrle A."/>
            <person name="Schuster C."/>
            <person name="Bahr A."/>
            <person name="Bloecker H."/>
            <person name="Heubner D."/>
            <person name="Hoerlein A."/>
            <person name="Michel G."/>
            <person name="Wedler H."/>
            <person name="Koehrer K."/>
            <person name="Ottenwaelder B."/>
            <person name="Poustka A."/>
            <person name="Wiemann S."/>
            <person name="Schupp I."/>
        </authorList>
    </citation>
    <scope>NUCLEOTIDE SEQUENCE [LARGE SCALE MRNA] OF 221-1128 (ISOFORM 4)</scope>
    <source>
        <tissue>Fetal brain</tissue>
        <tissue>Fetal kidney</tissue>
    </source>
</reference>
<reference key="7">
    <citation type="journal article" date="2006" name="Nat. Biotechnol.">
        <title>A probability-based approach for high-throughput protein phosphorylation analysis and site localization.</title>
        <authorList>
            <person name="Beausoleil S.A."/>
            <person name="Villen J."/>
            <person name="Gerber S.A."/>
            <person name="Rush J."/>
            <person name="Gygi S.P."/>
        </authorList>
    </citation>
    <scope>PHOSPHORYLATION [LARGE SCALE ANALYSIS] AT SER-256 AND THR-260</scope>
    <scope>IDENTIFICATION BY MASS SPECTROMETRY [LARGE SCALE ANALYSIS]</scope>
    <source>
        <tissue>Cervix carcinoma</tissue>
    </source>
</reference>
<reference key="8">
    <citation type="journal article" date="2008" name="Proc. Natl. Acad. Sci. U.S.A.">
        <title>A quantitative atlas of mitotic phosphorylation.</title>
        <authorList>
            <person name="Dephoure N."/>
            <person name="Zhou C."/>
            <person name="Villen J."/>
            <person name="Beausoleil S.A."/>
            <person name="Bakalarski C.E."/>
            <person name="Elledge S.J."/>
            <person name="Gygi S.P."/>
        </authorList>
    </citation>
    <scope>PHOSPHORYLATION [LARGE SCALE ANALYSIS] AT SER-256; THR-260; SER-441; SER-821; SER-911 AND SER-917</scope>
    <scope>IDENTIFICATION BY MASS SPECTROMETRY [LARGE SCALE ANALYSIS]</scope>
    <source>
        <tissue>Cervix carcinoma</tissue>
    </source>
</reference>
<reference key="9">
    <citation type="journal article" date="2010" name="Sci. Signal.">
        <title>Quantitative phosphoproteomics reveals widespread full phosphorylation site occupancy during mitosis.</title>
        <authorList>
            <person name="Olsen J.V."/>
            <person name="Vermeulen M."/>
            <person name="Santamaria A."/>
            <person name="Kumar C."/>
            <person name="Miller M.L."/>
            <person name="Jensen L.J."/>
            <person name="Gnad F."/>
            <person name="Cox J."/>
            <person name="Jensen T.S."/>
            <person name="Nigg E.A."/>
            <person name="Brunak S."/>
            <person name="Mann M."/>
        </authorList>
    </citation>
    <scope>PHOSPHORYLATION [LARGE SCALE ANALYSIS] AT SER-256 AND SER-1121</scope>
    <scope>IDENTIFICATION BY MASS SPECTROMETRY [LARGE SCALE ANALYSIS]</scope>
    <source>
        <tissue>Cervix carcinoma</tissue>
    </source>
</reference>
<reference key="10">
    <citation type="journal article" date="2011" name="BMC Syst. Biol.">
        <title>Initial characterization of the human central proteome.</title>
        <authorList>
            <person name="Burkard T.R."/>
            <person name="Planyavsky M."/>
            <person name="Kaupe I."/>
            <person name="Breitwieser F.P."/>
            <person name="Buerckstuemmer T."/>
            <person name="Bennett K.L."/>
            <person name="Superti-Furga G."/>
            <person name="Colinge J."/>
        </authorList>
    </citation>
    <scope>IDENTIFICATION BY MASS SPECTROMETRY [LARGE SCALE ANALYSIS]</scope>
</reference>
<reference key="11">
    <citation type="journal article" date="2013" name="J. Proteome Res.">
        <title>Toward a comprehensive characterization of a human cancer cell phosphoproteome.</title>
        <authorList>
            <person name="Zhou H."/>
            <person name="Di Palma S."/>
            <person name="Preisinger C."/>
            <person name="Peng M."/>
            <person name="Polat A.N."/>
            <person name="Heck A.J."/>
            <person name="Mohammed S."/>
        </authorList>
    </citation>
    <scope>PHOSPHORYLATION [LARGE SCALE ANALYSIS] AT SER-273; THR-284; SER-344; SER-356 AND SER-917</scope>
    <scope>IDENTIFICATION BY MASS SPECTROMETRY [LARGE SCALE ANALYSIS]</scope>
    <source>
        <tissue>Cervix carcinoma</tissue>
        <tissue>Erythroleukemia</tissue>
    </source>
</reference>
<reference key="12">
    <citation type="journal article" date="2014" name="J. Proteomics">
        <title>An enzyme assisted RP-RPLC approach for in-depth analysis of human liver phosphoproteome.</title>
        <authorList>
            <person name="Bian Y."/>
            <person name="Song C."/>
            <person name="Cheng K."/>
            <person name="Dong M."/>
            <person name="Wang F."/>
            <person name="Huang J."/>
            <person name="Sun D."/>
            <person name="Wang L."/>
            <person name="Ye M."/>
            <person name="Zou H."/>
        </authorList>
    </citation>
    <scope>PHOSPHORYLATION [LARGE SCALE ANALYSIS] AT SER-204; SER-222; SER-256; THR-260; SER-344; SER-438; SER-441; SER-786; SER-814; SER-821; SER-911 AND SER-917</scope>
    <scope>IDENTIFICATION BY MASS SPECTROMETRY [LARGE SCALE ANALYSIS]</scope>
    <source>
        <tissue>Liver</tissue>
    </source>
</reference>
<reference key="13">
    <citation type="submission" date="2006-06" db="PDB data bank">
        <title>Solution structure of the novel identified ubiquitin-like domain in the human COBL-like 1 protein.</title>
        <authorList>
            <consortium name="RIKEN structural genomics initiative (RSGI)"/>
        </authorList>
    </citation>
    <scope>STRUCTURE BY NMR OF 144-222</scope>
</reference>
<dbReference type="EMBL" id="AB023194">
    <property type="protein sequence ID" value="BAA76821.2"/>
    <property type="status" value="ALT_INIT"/>
    <property type="molecule type" value="mRNA"/>
</dbReference>
<dbReference type="EMBL" id="AK225849">
    <property type="status" value="NOT_ANNOTATED_CDS"/>
    <property type="molecule type" value="mRNA"/>
</dbReference>
<dbReference type="EMBL" id="AC019181">
    <property type="protein sequence ID" value="AAX93068.1"/>
    <property type="molecule type" value="Genomic_DNA"/>
</dbReference>
<dbReference type="EMBL" id="CH471058">
    <property type="protein sequence ID" value="EAX11340.1"/>
    <property type="molecule type" value="Genomic_DNA"/>
</dbReference>
<dbReference type="EMBL" id="BC006264">
    <property type="protein sequence ID" value="AAH06264.1"/>
    <property type="status" value="ALT_SEQ"/>
    <property type="molecule type" value="mRNA"/>
</dbReference>
<dbReference type="EMBL" id="BC071588">
    <property type="protein sequence ID" value="AAH71588.1"/>
    <property type="molecule type" value="mRNA"/>
</dbReference>
<dbReference type="EMBL" id="AL049939">
    <property type="protein sequence ID" value="CAB43215.1"/>
    <property type="molecule type" value="mRNA"/>
</dbReference>
<dbReference type="EMBL" id="BX537877">
    <property type="protein sequence ID" value="CAD97877.2"/>
    <property type="molecule type" value="mRNA"/>
</dbReference>
<dbReference type="CCDS" id="CCDS2223.2">
    <molecule id="Q53SF7-3"/>
</dbReference>
<dbReference type="CCDS" id="CCDS63045.1">
    <molecule id="Q53SF7-4"/>
</dbReference>
<dbReference type="PIR" id="T08673">
    <property type="entry name" value="T08673"/>
</dbReference>
<dbReference type="RefSeq" id="NP_001265387.1">
    <property type="nucleotide sequence ID" value="NM_001278458.1"/>
</dbReference>
<dbReference type="RefSeq" id="NP_001265389.1">
    <property type="nucleotide sequence ID" value="NM_001278460.1"/>
</dbReference>
<dbReference type="RefSeq" id="NP_001265390.1">
    <molecule id="Q53SF7-4"/>
    <property type="nucleotide sequence ID" value="NM_001278461.2"/>
</dbReference>
<dbReference type="RefSeq" id="NP_001352601.1">
    <molecule id="Q53SF7-4"/>
    <property type="nucleotide sequence ID" value="NM_001365672.2"/>
</dbReference>
<dbReference type="RefSeq" id="NP_001352602.1">
    <molecule id="Q53SF7-4"/>
    <property type="nucleotide sequence ID" value="NM_001365673.2"/>
</dbReference>
<dbReference type="RefSeq" id="NP_055715.3">
    <molecule id="Q53SF7-3"/>
    <property type="nucleotide sequence ID" value="NM_014900.4"/>
</dbReference>
<dbReference type="PDB" id="2DAJ">
    <property type="method" value="NMR"/>
    <property type="chains" value="A=144-221"/>
</dbReference>
<dbReference type="PDBsum" id="2DAJ"/>
<dbReference type="BMRB" id="Q53SF7"/>
<dbReference type="SMR" id="Q53SF7"/>
<dbReference type="BioGRID" id="116511">
    <property type="interactions" value="72"/>
</dbReference>
<dbReference type="CORUM" id="Q53SF7"/>
<dbReference type="FunCoup" id="Q53SF7">
    <property type="interactions" value="501"/>
</dbReference>
<dbReference type="IntAct" id="Q53SF7">
    <property type="interactions" value="37"/>
</dbReference>
<dbReference type="MINT" id="Q53SF7"/>
<dbReference type="STRING" id="9606.ENSP00000487041"/>
<dbReference type="GlyGen" id="Q53SF7">
    <property type="glycosylation" value="1 site"/>
</dbReference>
<dbReference type="iPTMnet" id="Q53SF7"/>
<dbReference type="PhosphoSitePlus" id="Q53SF7"/>
<dbReference type="BioMuta" id="COBLL1"/>
<dbReference type="jPOST" id="Q53SF7"/>
<dbReference type="MassIVE" id="Q53SF7"/>
<dbReference type="PaxDb" id="9606-ENSP00000341360"/>
<dbReference type="PeptideAtlas" id="Q53SF7"/>
<dbReference type="ProteomicsDB" id="62537">
    <molecule id="Q53SF7-2"/>
</dbReference>
<dbReference type="ProteomicsDB" id="62538">
    <molecule id="Q53SF7-3"/>
</dbReference>
<dbReference type="ProteomicsDB" id="62539">
    <molecule id="Q53SF7-4"/>
</dbReference>
<dbReference type="Pumba" id="Q53SF7"/>
<dbReference type="Antibodypedia" id="33758">
    <property type="antibodies" value="153 antibodies from 18 providers"/>
</dbReference>
<dbReference type="DNASU" id="22837"/>
<dbReference type="Ensembl" id="ENST00000342193.8">
    <molecule id="Q53SF7-3"/>
    <property type="protein sequence ID" value="ENSP00000341360.4"/>
    <property type="gene ID" value="ENSG00000082438.18"/>
</dbReference>
<dbReference type="Ensembl" id="ENST00000375458.6">
    <molecule id="Q53SF7-4"/>
    <property type="protein sequence ID" value="ENSP00000364607.2"/>
    <property type="gene ID" value="ENSG00000082438.18"/>
</dbReference>
<dbReference type="Ensembl" id="ENST00000652658.2">
    <molecule id="Q53SF7-4"/>
    <property type="protein sequence ID" value="ENSP00000498242.1"/>
    <property type="gene ID" value="ENSG00000082438.18"/>
</dbReference>
<dbReference type="GeneID" id="22837"/>
<dbReference type="KEGG" id="hsa:22837"/>
<dbReference type="MANE-Select" id="ENST00000652658.2">
    <property type="protein sequence ID" value="ENSP00000498242.1"/>
    <property type="RefSeq nucleotide sequence ID" value="NM_001365672.2"/>
    <property type="RefSeq protein sequence ID" value="NP_001352601.1"/>
</dbReference>
<dbReference type="UCSC" id="uc002ucp.5">
    <molecule id="Q53SF7-4"/>
    <property type="organism name" value="human"/>
</dbReference>
<dbReference type="AGR" id="HGNC:23571"/>
<dbReference type="CTD" id="22837"/>
<dbReference type="DisGeNET" id="22837"/>
<dbReference type="GeneCards" id="COBLL1"/>
<dbReference type="HGNC" id="HGNC:23571">
    <property type="gene designation" value="COBLL1"/>
</dbReference>
<dbReference type="HPA" id="ENSG00000082438">
    <property type="expression patterns" value="Tissue enhanced (liver)"/>
</dbReference>
<dbReference type="MalaCards" id="COBLL1"/>
<dbReference type="MIM" id="610318">
    <property type="type" value="gene"/>
</dbReference>
<dbReference type="neXtProt" id="NX_Q53SF7"/>
<dbReference type="OpenTargets" id="ENSG00000082438"/>
<dbReference type="Orphanet" id="199306">
    <property type="disease" value="Cleft lip/palate"/>
</dbReference>
<dbReference type="PharmGKB" id="PA134990267"/>
<dbReference type="VEuPathDB" id="HostDB:ENSG00000082438"/>
<dbReference type="eggNOG" id="KOG3751">
    <property type="taxonomic scope" value="Eukaryota"/>
</dbReference>
<dbReference type="GeneTree" id="ENSGT00530000063608"/>
<dbReference type="HOGENOM" id="CLU_003305_0_0_1"/>
<dbReference type="InParanoid" id="Q53SF7"/>
<dbReference type="OrthoDB" id="8882621at2759"/>
<dbReference type="PAN-GO" id="Q53SF7">
    <property type="GO annotations" value="0 GO annotations based on evolutionary models"/>
</dbReference>
<dbReference type="PhylomeDB" id="Q53SF7"/>
<dbReference type="TreeFam" id="TF333490"/>
<dbReference type="PathwayCommons" id="Q53SF7"/>
<dbReference type="SignaLink" id="Q53SF7"/>
<dbReference type="BioGRID-ORCS" id="22837">
    <property type="hits" value="10 hits in 1153 CRISPR screens"/>
</dbReference>
<dbReference type="ChiTaRS" id="COBLL1">
    <property type="organism name" value="human"/>
</dbReference>
<dbReference type="EvolutionaryTrace" id="Q53SF7"/>
<dbReference type="GeneWiki" id="COBLL1"/>
<dbReference type="GenomeRNAi" id="22837"/>
<dbReference type="Pharos" id="Q53SF7">
    <property type="development level" value="Tbio"/>
</dbReference>
<dbReference type="PRO" id="PR:Q53SF7"/>
<dbReference type="Proteomes" id="UP000005640">
    <property type="component" value="Chromosome 2"/>
</dbReference>
<dbReference type="RNAct" id="Q53SF7">
    <property type="molecule type" value="protein"/>
</dbReference>
<dbReference type="Bgee" id="ENSG00000082438">
    <property type="expression patterns" value="Expressed in sural nerve and 197 other cell types or tissues"/>
</dbReference>
<dbReference type="ExpressionAtlas" id="Q53SF7">
    <property type="expression patterns" value="baseline and differential"/>
</dbReference>
<dbReference type="GO" id="GO:0070062">
    <property type="term" value="C:extracellular exosome"/>
    <property type="evidence" value="ECO:0007005"/>
    <property type="project" value="UniProtKB"/>
</dbReference>
<dbReference type="GO" id="GO:0003785">
    <property type="term" value="F:actin monomer binding"/>
    <property type="evidence" value="ECO:0007669"/>
    <property type="project" value="InterPro"/>
</dbReference>
<dbReference type="GO" id="GO:0045296">
    <property type="term" value="F:cadherin binding"/>
    <property type="evidence" value="ECO:0007005"/>
    <property type="project" value="BHF-UCL"/>
</dbReference>
<dbReference type="CDD" id="cd21801">
    <property type="entry name" value="WH2_Wc_Cobl"/>
    <property type="match status" value="1"/>
</dbReference>
<dbReference type="FunFam" id="3.10.20.90:FF:000065">
    <property type="entry name" value="Cordon-bleu WH2 repeat protein"/>
    <property type="match status" value="1"/>
</dbReference>
<dbReference type="Gene3D" id="3.10.20.90">
    <property type="entry name" value="Phosphatidylinositol 3-kinase Catalytic Subunit, Chain A, domain 1"/>
    <property type="match status" value="1"/>
</dbReference>
<dbReference type="InterPro" id="IPR039895">
    <property type="entry name" value="COBL-like"/>
</dbReference>
<dbReference type="InterPro" id="IPR019025">
    <property type="entry name" value="Cordon-bleu_ubiquitin_domain"/>
</dbReference>
<dbReference type="InterPro" id="IPR003124">
    <property type="entry name" value="WH2_dom"/>
</dbReference>
<dbReference type="PANTHER" id="PTHR21557">
    <property type="entry name" value="CORDON-BLEU"/>
    <property type="match status" value="1"/>
</dbReference>
<dbReference type="PANTHER" id="PTHR21557:SF2">
    <property type="entry name" value="CORDON-BLEU PROTEIN-LIKE 1"/>
    <property type="match status" value="1"/>
</dbReference>
<dbReference type="Pfam" id="PF09469">
    <property type="entry name" value="Cobl"/>
    <property type="match status" value="1"/>
</dbReference>
<dbReference type="PROSITE" id="PS51082">
    <property type="entry name" value="WH2"/>
    <property type="match status" value="1"/>
</dbReference>
<name>COBL1_HUMAN</name>
<keyword id="KW-0002">3D-structure</keyword>
<keyword id="KW-0025">Alternative splicing</keyword>
<keyword id="KW-0597">Phosphoprotein</keyword>
<keyword id="KW-1267">Proteomics identification</keyword>
<keyword id="KW-1185">Reference proteome</keyword>
<keyword id="KW-0677">Repeat</keyword>
<gene>
    <name evidence="5" type="primary">COBLL1</name>
    <name type="synonym">KIAA0977</name>
</gene>
<evidence type="ECO:0000250" key="1">
    <source>
        <dbReference type="UniProtKB" id="Q3UMF0"/>
    </source>
</evidence>
<evidence type="ECO:0000255" key="2">
    <source>
        <dbReference type="PROSITE-ProRule" id="PRU00406"/>
    </source>
</evidence>
<evidence type="ECO:0000256" key="3">
    <source>
        <dbReference type="SAM" id="MobiDB-lite"/>
    </source>
</evidence>
<evidence type="ECO:0000305" key="4"/>
<evidence type="ECO:0000312" key="5">
    <source>
        <dbReference type="HGNC" id="HGNC:23571"/>
    </source>
</evidence>
<evidence type="ECO:0007744" key="6">
    <source>
    </source>
</evidence>
<evidence type="ECO:0007744" key="7">
    <source>
    </source>
</evidence>
<evidence type="ECO:0007744" key="8">
    <source>
    </source>
</evidence>
<evidence type="ECO:0007744" key="9">
    <source>
    </source>
</evidence>
<evidence type="ECO:0007744" key="10">
    <source>
    </source>
</evidence>
<evidence type="ECO:0007829" key="11">
    <source>
        <dbReference type="PDB" id="2DAJ"/>
    </source>
</evidence>